<accession>P15312</accession>
<organism>
    <name type="scientific">Hordeum vulgare</name>
    <name type="common">Barley</name>
    <dbReference type="NCBI Taxonomy" id="4513"/>
    <lineage>
        <taxon>Eukaryota</taxon>
        <taxon>Viridiplantae</taxon>
        <taxon>Streptophyta</taxon>
        <taxon>Embryophyta</taxon>
        <taxon>Tracheophyta</taxon>
        <taxon>Spermatophyta</taxon>
        <taxon>Magnoliopsida</taxon>
        <taxon>Liliopsida</taxon>
        <taxon>Poales</taxon>
        <taxon>Poaceae</taxon>
        <taxon>BOP clade</taxon>
        <taxon>Pooideae</taxon>
        <taxon>Triticodae</taxon>
        <taxon>Triticeae</taxon>
        <taxon>Hordeinae</taxon>
        <taxon>Hordeum</taxon>
    </lineage>
</organism>
<evidence type="ECO:0000250" key="1"/>
<evidence type="ECO:0000255" key="2"/>
<evidence type="ECO:0000255" key="3">
    <source>
        <dbReference type="PROSITE-ProRule" id="PRU00261"/>
    </source>
</evidence>
<evidence type="ECO:0000269" key="4">
    <source>
    </source>
</evidence>
<sequence>MKMMSTRALALGAAAVLAFAAATAHAQRCGEQGSNMECPNNLCCSQYGYCGMGGDYCGKGCQNGACYTSKRCGTQAGGKTCPNNHCCSQWGYCGFGAEYCGAGCQGGPCRADIKCGSQAGGKLCPNNLCCSQWGYCGLGSEFCGEGCQGGACSTDKPCGKAAGGKVCTNNYCCSKWGSCGIGPGYCGAGCQSGGCDGVFAEAIAANSTLVAE</sequence>
<proteinExistence type="evidence at protein level"/>
<feature type="signal peptide" evidence="2">
    <location>
        <begin position="1"/>
        <end position="26"/>
    </location>
</feature>
<feature type="chain" id="PRO_0000005261" description="Root-specific lectin">
    <location>
        <begin position="27"/>
        <end position="212"/>
    </location>
</feature>
<feature type="domain" description="Chitin-binding type-1 1" evidence="3">
    <location>
        <begin position="27"/>
        <end position="68"/>
    </location>
</feature>
<feature type="domain" description="Chitin-binding type-1 2" evidence="3">
    <location>
        <begin position="69"/>
        <end position="111"/>
    </location>
</feature>
<feature type="domain" description="Chitin-binding type-1 3" evidence="3">
    <location>
        <begin position="112"/>
        <end position="154"/>
    </location>
</feature>
<feature type="domain" description="Chitin-binding type-1 4" evidence="3">
    <location>
        <begin position="155"/>
        <end position="197"/>
    </location>
</feature>
<feature type="binding site" evidence="1">
    <location>
        <begin position="36"/>
        <end position="38"/>
    </location>
    <ligand>
        <name>substrate</name>
    </ligand>
</feature>
<feature type="binding site" evidence="1">
    <location>
        <begin position="88"/>
        <end position="99"/>
    </location>
    <ligand>
        <name>substrate</name>
    </ligand>
</feature>
<feature type="binding site" evidence="1">
    <location>
        <begin position="140"/>
        <end position="141"/>
    </location>
    <ligand>
        <name>substrate</name>
    </ligand>
</feature>
<feature type="modified residue" description="Pyrrolidone carboxylic acid" evidence="1">
    <location>
        <position position="27"/>
    </location>
</feature>
<feature type="glycosylation site" description="N-linked (GlcNAc...) asparagine" evidence="2">
    <location>
        <position position="206"/>
    </location>
</feature>
<feature type="disulfide bond" evidence="3">
    <location>
        <begin position="29"/>
        <end position="44"/>
    </location>
</feature>
<feature type="disulfide bond" evidence="3">
    <location>
        <begin position="38"/>
        <end position="50"/>
    </location>
</feature>
<feature type="disulfide bond" evidence="3">
    <location>
        <begin position="43"/>
        <end position="57"/>
    </location>
</feature>
<feature type="disulfide bond" evidence="3">
    <location>
        <begin position="61"/>
        <end position="66"/>
    </location>
</feature>
<feature type="disulfide bond" evidence="3">
    <location>
        <begin position="72"/>
        <end position="87"/>
    </location>
</feature>
<feature type="disulfide bond" evidence="3">
    <location>
        <begin position="81"/>
        <end position="93"/>
    </location>
</feature>
<feature type="disulfide bond" evidence="3">
    <location>
        <begin position="86"/>
        <end position="100"/>
    </location>
</feature>
<feature type="disulfide bond" evidence="3">
    <location>
        <begin position="104"/>
        <end position="109"/>
    </location>
</feature>
<feature type="disulfide bond" evidence="3">
    <location>
        <begin position="115"/>
        <end position="130"/>
    </location>
</feature>
<feature type="disulfide bond" evidence="3">
    <location>
        <begin position="124"/>
        <end position="136"/>
    </location>
</feature>
<feature type="disulfide bond" evidence="3">
    <location>
        <begin position="129"/>
        <end position="143"/>
    </location>
</feature>
<feature type="disulfide bond" evidence="3">
    <location>
        <begin position="147"/>
        <end position="152"/>
    </location>
</feature>
<feature type="disulfide bond" evidence="3">
    <location>
        <begin position="158"/>
        <end position="173"/>
    </location>
</feature>
<feature type="disulfide bond" evidence="3">
    <location>
        <begin position="167"/>
        <end position="179"/>
    </location>
</feature>
<feature type="disulfide bond" evidence="3">
    <location>
        <begin position="172"/>
        <end position="186"/>
    </location>
</feature>
<feature type="disulfide bond" evidence="3">
    <location>
        <begin position="190"/>
        <end position="195"/>
    </location>
</feature>
<keyword id="KW-0147">Chitin-binding</keyword>
<keyword id="KW-1015">Disulfide bond</keyword>
<keyword id="KW-0325">Glycoprotein</keyword>
<keyword id="KW-0430">Lectin</keyword>
<keyword id="KW-0873">Pyrrolidone carboxylic acid</keyword>
<keyword id="KW-0677">Repeat</keyword>
<keyword id="KW-0732">Signal</keyword>
<dbReference type="EMBL" id="M29280">
    <property type="protein sequence ID" value="AAA32969.1"/>
    <property type="molecule type" value="mRNA"/>
</dbReference>
<dbReference type="PIR" id="T05936">
    <property type="entry name" value="T05936"/>
</dbReference>
<dbReference type="SMR" id="P15312"/>
<dbReference type="CAZy" id="CBM18">
    <property type="family name" value="Carbohydrate-Binding Module Family 18"/>
</dbReference>
<dbReference type="ExpressionAtlas" id="P15312">
    <property type="expression patterns" value="baseline and differential"/>
</dbReference>
<dbReference type="GO" id="GO:0030246">
    <property type="term" value="F:carbohydrate binding"/>
    <property type="evidence" value="ECO:0007669"/>
    <property type="project" value="UniProtKB-KW"/>
</dbReference>
<dbReference type="GO" id="GO:0008061">
    <property type="term" value="F:chitin binding"/>
    <property type="evidence" value="ECO:0007669"/>
    <property type="project" value="UniProtKB-KW"/>
</dbReference>
<dbReference type="CDD" id="cd00035">
    <property type="entry name" value="ChtBD1"/>
    <property type="match status" value="4"/>
</dbReference>
<dbReference type="FunFam" id="3.30.60.10:FF:000006">
    <property type="entry name" value="Agglutinin isolectin 1"/>
    <property type="match status" value="2"/>
</dbReference>
<dbReference type="Gene3D" id="3.30.60.10">
    <property type="entry name" value="Endochitinase-like"/>
    <property type="match status" value="4"/>
</dbReference>
<dbReference type="InterPro" id="IPR001002">
    <property type="entry name" value="Chitin-bd_1"/>
</dbReference>
<dbReference type="InterPro" id="IPR018371">
    <property type="entry name" value="Chitin-binding_1_CS"/>
</dbReference>
<dbReference type="InterPro" id="IPR036861">
    <property type="entry name" value="Endochitinase-like_sf"/>
</dbReference>
<dbReference type="PANTHER" id="PTHR47849">
    <property type="entry name" value="CHITIN-BINDING LECTIN 1"/>
    <property type="match status" value="1"/>
</dbReference>
<dbReference type="PANTHER" id="PTHR47849:SF8">
    <property type="entry name" value="LECTIN"/>
    <property type="match status" value="1"/>
</dbReference>
<dbReference type="Pfam" id="PF00187">
    <property type="entry name" value="Chitin_bind_1"/>
    <property type="match status" value="4"/>
</dbReference>
<dbReference type="PRINTS" id="PR00451">
    <property type="entry name" value="CHITINBINDNG"/>
</dbReference>
<dbReference type="SMART" id="SM00270">
    <property type="entry name" value="ChtBD1"/>
    <property type="match status" value="4"/>
</dbReference>
<dbReference type="SUPFAM" id="SSF57016">
    <property type="entry name" value="Plant lectins/antimicrobial peptides"/>
    <property type="match status" value="4"/>
</dbReference>
<dbReference type="PROSITE" id="PS00026">
    <property type="entry name" value="CHIT_BIND_I_1"/>
    <property type="match status" value="4"/>
</dbReference>
<dbReference type="PROSITE" id="PS50941">
    <property type="entry name" value="CHIT_BIND_I_2"/>
    <property type="match status" value="4"/>
</dbReference>
<comment type="function">
    <text>Carbohydrate binding.</text>
</comment>
<comment type="tissue specificity">
    <text evidence="4">In roots.</text>
</comment>
<comment type="developmental stage">
    <text evidence="4">Localized to the coleorhiza, outer cell layers of the radicles, and the root caps of the developing embryo. Later found in the root tip and root cap.</text>
</comment>
<reference key="1">
    <citation type="journal article" date="1989" name="Plant Physiol.">
        <title>Cloning and characterization of root-specific barley lectin.</title>
        <authorList>
            <person name="Lerner D.R."/>
            <person name="Raikhel N.V."/>
        </authorList>
    </citation>
    <scope>NUCLEOTIDE SEQUENCE [MRNA]</scope>
    <scope>TISSUE SPECIFICITY</scope>
    <scope>DEVELOPMENTAL STAGE</scope>
    <scope>GLYCOSYLATION</scope>
</reference>
<name>AGI_HORVU</name>
<protein>
    <recommendedName>
        <fullName>Root-specific lectin</fullName>
    </recommendedName>
</protein>